<accession>B7LWK8</accession>
<reference key="1">
    <citation type="journal article" date="2009" name="PLoS Genet.">
        <title>Organised genome dynamics in the Escherichia coli species results in highly diverse adaptive paths.</title>
        <authorList>
            <person name="Touchon M."/>
            <person name="Hoede C."/>
            <person name="Tenaillon O."/>
            <person name="Barbe V."/>
            <person name="Baeriswyl S."/>
            <person name="Bidet P."/>
            <person name="Bingen E."/>
            <person name="Bonacorsi S."/>
            <person name="Bouchier C."/>
            <person name="Bouvet O."/>
            <person name="Calteau A."/>
            <person name="Chiapello H."/>
            <person name="Clermont O."/>
            <person name="Cruveiller S."/>
            <person name="Danchin A."/>
            <person name="Diard M."/>
            <person name="Dossat C."/>
            <person name="Karoui M.E."/>
            <person name="Frapy E."/>
            <person name="Garry L."/>
            <person name="Ghigo J.M."/>
            <person name="Gilles A.M."/>
            <person name="Johnson J."/>
            <person name="Le Bouguenec C."/>
            <person name="Lescat M."/>
            <person name="Mangenot S."/>
            <person name="Martinez-Jehanne V."/>
            <person name="Matic I."/>
            <person name="Nassif X."/>
            <person name="Oztas S."/>
            <person name="Petit M.A."/>
            <person name="Pichon C."/>
            <person name="Rouy Z."/>
            <person name="Ruf C.S."/>
            <person name="Schneider D."/>
            <person name="Tourret J."/>
            <person name="Vacherie B."/>
            <person name="Vallenet D."/>
            <person name="Medigue C."/>
            <person name="Rocha E.P.C."/>
            <person name="Denamur E."/>
        </authorList>
    </citation>
    <scope>NUCLEOTIDE SEQUENCE [LARGE SCALE GENOMIC DNA]</scope>
    <source>
        <strain>ATCC 35469 / DSM 13698 / BCRC 15582 / CCUG 18766 / IAM 14443 / JCM 21226 / LMG 7866 / NBRC 102419 / NCTC 12128 / CDC 0568-73</strain>
    </source>
</reference>
<dbReference type="EC" id="2.7.7.60" evidence="1"/>
<dbReference type="EMBL" id="CU928158">
    <property type="protein sequence ID" value="CAQ87884.1"/>
    <property type="molecule type" value="Genomic_DNA"/>
</dbReference>
<dbReference type="RefSeq" id="WP_000741662.1">
    <property type="nucleotide sequence ID" value="NC_011740.1"/>
</dbReference>
<dbReference type="SMR" id="B7LWK8"/>
<dbReference type="GeneID" id="75058607"/>
<dbReference type="KEGG" id="efe:EFER_0321"/>
<dbReference type="HOGENOM" id="CLU_061281_3_1_6"/>
<dbReference type="OrthoDB" id="9806837at2"/>
<dbReference type="UniPathway" id="UPA00056">
    <property type="reaction ID" value="UER00093"/>
</dbReference>
<dbReference type="Proteomes" id="UP000000745">
    <property type="component" value="Chromosome"/>
</dbReference>
<dbReference type="GO" id="GO:0050518">
    <property type="term" value="F:2-C-methyl-D-erythritol 4-phosphate cytidylyltransferase activity"/>
    <property type="evidence" value="ECO:0007669"/>
    <property type="project" value="UniProtKB-UniRule"/>
</dbReference>
<dbReference type="GO" id="GO:0019288">
    <property type="term" value="P:isopentenyl diphosphate biosynthetic process, methylerythritol 4-phosphate pathway"/>
    <property type="evidence" value="ECO:0007669"/>
    <property type="project" value="UniProtKB-UniRule"/>
</dbReference>
<dbReference type="CDD" id="cd02516">
    <property type="entry name" value="CDP-ME_synthetase"/>
    <property type="match status" value="1"/>
</dbReference>
<dbReference type="FunFam" id="3.90.550.10:FF:000003">
    <property type="entry name" value="2-C-methyl-D-erythritol 4-phosphate cytidylyltransferase"/>
    <property type="match status" value="1"/>
</dbReference>
<dbReference type="Gene3D" id="3.90.550.10">
    <property type="entry name" value="Spore Coat Polysaccharide Biosynthesis Protein SpsA, Chain A"/>
    <property type="match status" value="1"/>
</dbReference>
<dbReference type="HAMAP" id="MF_00108">
    <property type="entry name" value="IspD"/>
    <property type="match status" value="1"/>
</dbReference>
<dbReference type="InterPro" id="IPR001228">
    <property type="entry name" value="IspD"/>
</dbReference>
<dbReference type="InterPro" id="IPR034683">
    <property type="entry name" value="IspD/TarI"/>
</dbReference>
<dbReference type="InterPro" id="IPR050088">
    <property type="entry name" value="IspD/TarI_cytidylyltransf_bact"/>
</dbReference>
<dbReference type="InterPro" id="IPR018294">
    <property type="entry name" value="ISPD_synthase_CS"/>
</dbReference>
<dbReference type="InterPro" id="IPR029044">
    <property type="entry name" value="Nucleotide-diphossugar_trans"/>
</dbReference>
<dbReference type="NCBIfam" id="TIGR00453">
    <property type="entry name" value="ispD"/>
    <property type="match status" value="1"/>
</dbReference>
<dbReference type="PANTHER" id="PTHR32125">
    <property type="entry name" value="2-C-METHYL-D-ERYTHRITOL 4-PHOSPHATE CYTIDYLYLTRANSFERASE, CHLOROPLASTIC"/>
    <property type="match status" value="1"/>
</dbReference>
<dbReference type="PANTHER" id="PTHR32125:SF4">
    <property type="entry name" value="2-C-METHYL-D-ERYTHRITOL 4-PHOSPHATE CYTIDYLYLTRANSFERASE, CHLOROPLASTIC"/>
    <property type="match status" value="1"/>
</dbReference>
<dbReference type="Pfam" id="PF01128">
    <property type="entry name" value="IspD"/>
    <property type="match status" value="1"/>
</dbReference>
<dbReference type="SUPFAM" id="SSF53448">
    <property type="entry name" value="Nucleotide-diphospho-sugar transferases"/>
    <property type="match status" value="1"/>
</dbReference>
<dbReference type="PROSITE" id="PS01295">
    <property type="entry name" value="ISPD"/>
    <property type="match status" value="1"/>
</dbReference>
<evidence type="ECO:0000255" key="1">
    <source>
        <dbReference type="HAMAP-Rule" id="MF_00108"/>
    </source>
</evidence>
<feature type="chain" id="PRO_1000191059" description="2-C-methyl-D-erythritol 4-phosphate cytidylyltransferase">
    <location>
        <begin position="1"/>
        <end position="236"/>
    </location>
</feature>
<feature type="site" description="Transition state stabilizer" evidence="1">
    <location>
        <position position="20"/>
    </location>
</feature>
<feature type="site" description="Transition state stabilizer" evidence="1">
    <location>
        <position position="27"/>
    </location>
</feature>
<feature type="site" description="Positions MEP for the nucleophilic attack" evidence="1">
    <location>
        <position position="157"/>
    </location>
</feature>
<feature type="site" description="Positions MEP for the nucleophilic attack" evidence="1">
    <location>
        <position position="213"/>
    </location>
</feature>
<organism>
    <name type="scientific">Escherichia fergusonii (strain ATCC 35469 / DSM 13698 / CCUG 18766 / IAM 14443 / JCM 21226 / LMG 7866 / NBRC 102419 / NCTC 12128 / CDC 0568-73)</name>
    <dbReference type="NCBI Taxonomy" id="585054"/>
    <lineage>
        <taxon>Bacteria</taxon>
        <taxon>Pseudomonadati</taxon>
        <taxon>Pseudomonadota</taxon>
        <taxon>Gammaproteobacteria</taxon>
        <taxon>Enterobacterales</taxon>
        <taxon>Enterobacteriaceae</taxon>
        <taxon>Escherichia</taxon>
    </lineage>
</organism>
<gene>
    <name evidence="1" type="primary">ispD</name>
    <name type="ordered locus">EFER_0321</name>
</gene>
<name>ISPD_ESCF3</name>
<proteinExistence type="inferred from homology"/>
<keyword id="KW-0414">Isoprene biosynthesis</keyword>
<keyword id="KW-0548">Nucleotidyltransferase</keyword>
<keyword id="KW-0808">Transferase</keyword>
<comment type="function">
    <text evidence="1">Catalyzes the formation of 4-diphosphocytidyl-2-C-methyl-D-erythritol from CTP and 2-C-methyl-D-erythritol 4-phosphate (MEP).</text>
</comment>
<comment type="catalytic activity">
    <reaction evidence="1">
        <text>2-C-methyl-D-erythritol 4-phosphate + CTP + H(+) = 4-CDP-2-C-methyl-D-erythritol + diphosphate</text>
        <dbReference type="Rhea" id="RHEA:13429"/>
        <dbReference type="ChEBI" id="CHEBI:15378"/>
        <dbReference type="ChEBI" id="CHEBI:33019"/>
        <dbReference type="ChEBI" id="CHEBI:37563"/>
        <dbReference type="ChEBI" id="CHEBI:57823"/>
        <dbReference type="ChEBI" id="CHEBI:58262"/>
        <dbReference type="EC" id="2.7.7.60"/>
    </reaction>
</comment>
<comment type="pathway">
    <text evidence="1">Isoprenoid biosynthesis; isopentenyl diphosphate biosynthesis via DXP pathway; isopentenyl diphosphate from 1-deoxy-D-xylulose 5-phosphate: step 2/6.</text>
</comment>
<comment type="subunit">
    <text evidence="1">Homodimer.</text>
</comment>
<comment type="similarity">
    <text evidence="1">Belongs to the IspD/TarI cytidylyltransferase family. IspD subfamily.</text>
</comment>
<sequence length="236" mass="25761">MAATNIDVCAVVPAAGYGRRMQTECPKQYLSIGNKTILEHSVHALLAHPRVTRVIIVISPGDSRFAQLPLANHPQITVVDGGEERADSVLAGIKAVGDAEWVLVHDAARPCLHQDDLARLLTLSETSRTGGILAAPVRDTMKRAEPGKNAIAHTVDRSGLWHALTPQFFPRELLHDCLTRALNEGATITDEASALEYCGFHPQLVEGRADNIKVTRPEDLALAEFYLTRTIHQENT</sequence>
<protein>
    <recommendedName>
        <fullName evidence="1">2-C-methyl-D-erythritol 4-phosphate cytidylyltransferase</fullName>
        <ecNumber evidence="1">2.7.7.60</ecNumber>
    </recommendedName>
    <alternativeName>
        <fullName evidence="1">4-diphosphocytidyl-2C-methyl-D-erythritol synthase</fullName>
    </alternativeName>
    <alternativeName>
        <fullName evidence="1">MEP cytidylyltransferase</fullName>
        <shortName evidence="1">MCT</shortName>
    </alternativeName>
</protein>